<dbReference type="EC" id="1.13.11.5" evidence="1"/>
<dbReference type="EMBL" id="CP000614">
    <property type="protein sequence ID" value="ABO53769.1"/>
    <property type="molecule type" value="Genomic_DNA"/>
</dbReference>
<dbReference type="SMR" id="A4JBW6"/>
<dbReference type="KEGG" id="bvi:Bcep1808_0757"/>
<dbReference type="eggNOG" id="COG3508">
    <property type="taxonomic scope" value="Bacteria"/>
</dbReference>
<dbReference type="HOGENOM" id="CLU_027174_0_0_4"/>
<dbReference type="UniPathway" id="UPA00139">
    <property type="reaction ID" value="UER00339"/>
</dbReference>
<dbReference type="Proteomes" id="UP000002287">
    <property type="component" value="Chromosome 1"/>
</dbReference>
<dbReference type="GO" id="GO:0005737">
    <property type="term" value="C:cytoplasm"/>
    <property type="evidence" value="ECO:0007669"/>
    <property type="project" value="TreeGrafter"/>
</dbReference>
<dbReference type="GO" id="GO:0004411">
    <property type="term" value="F:homogentisate 1,2-dioxygenase activity"/>
    <property type="evidence" value="ECO:0007669"/>
    <property type="project" value="UniProtKB-UniRule"/>
</dbReference>
<dbReference type="GO" id="GO:0005506">
    <property type="term" value="F:iron ion binding"/>
    <property type="evidence" value="ECO:0007669"/>
    <property type="project" value="UniProtKB-UniRule"/>
</dbReference>
<dbReference type="GO" id="GO:0006559">
    <property type="term" value="P:L-phenylalanine catabolic process"/>
    <property type="evidence" value="ECO:0007669"/>
    <property type="project" value="UniProtKB-UniRule"/>
</dbReference>
<dbReference type="GO" id="GO:0006572">
    <property type="term" value="P:tyrosine catabolic process"/>
    <property type="evidence" value="ECO:0007669"/>
    <property type="project" value="UniProtKB-UniRule"/>
</dbReference>
<dbReference type="CDD" id="cd07000">
    <property type="entry name" value="cupin_HGO_N"/>
    <property type="match status" value="1"/>
</dbReference>
<dbReference type="FunFam" id="2.60.120.10:FF:000034">
    <property type="entry name" value="Homogentisate 1,2-dioxygenase"/>
    <property type="match status" value="1"/>
</dbReference>
<dbReference type="Gene3D" id="2.60.120.10">
    <property type="entry name" value="Jelly Rolls"/>
    <property type="match status" value="1"/>
</dbReference>
<dbReference type="HAMAP" id="MF_00334">
    <property type="entry name" value="Homogentis_dioxygen"/>
    <property type="match status" value="1"/>
</dbReference>
<dbReference type="InterPro" id="IPR046451">
    <property type="entry name" value="HgmA_C"/>
</dbReference>
<dbReference type="InterPro" id="IPR046452">
    <property type="entry name" value="HgmA_N"/>
</dbReference>
<dbReference type="InterPro" id="IPR005708">
    <property type="entry name" value="Homogentis_dOase"/>
</dbReference>
<dbReference type="InterPro" id="IPR022950">
    <property type="entry name" value="Homogentis_dOase_bac"/>
</dbReference>
<dbReference type="InterPro" id="IPR014710">
    <property type="entry name" value="RmlC-like_jellyroll"/>
</dbReference>
<dbReference type="InterPro" id="IPR011051">
    <property type="entry name" value="RmlC_Cupin_sf"/>
</dbReference>
<dbReference type="NCBIfam" id="TIGR01015">
    <property type="entry name" value="hmgA"/>
    <property type="match status" value="1"/>
</dbReference>
<dbReference type="PANTHER" id="PTHR11056">
    <property type="entry name" value="HOMOGENTISATE 1,2-DIOXYGENASE"/>
    <property type="match status" value="1"/>
</dbReference>
<dbReference type="PANTHER" id="PTHR11056:SF0">
    <property type="entry name" value="HOMOGENTISATE 1,2-DIOXYGENASE"/>
    <property type="match status" value="1"/>
</dbReference>
<dbReference type="Pfam" id="PF04209">
    <property type="entry name" value="HgmA_C"/>
    <property type="match status" value="1"/>
</dbReference>
<dbReference type="Pfam" id="PF20510">
    <property type="entry name" value="HgmA_N"/>
    <property type="match status" value="1"/>
</dbReference>
<dbReference type="SUPFAM" id="SSF51182">
    <property type="entry name" value="RmlC-like cupins"/>
    <property type="match status" value="1"/>
</dbReference>
<protein>
    <recommendedName>
        <fullName evidence="1">Homogentisate 1,2-dioxygenase</fullName>
        <shortName evidence="1">HGDO</shortName>
        <ecNumber evidence="1">1.13.11.5</ecNumber>
    </recommendedName>
    <alternativeName>
        <fullName evidence="1">Homogentisate oxygenase</fullName>
    </alternativeName>
    <alternativeName>
        <fullName evidence="1">Homogentisic acid oxidase</fullName>
    </alternativeName>
    <alternativeName>
        <fullName evidence="1">Homogentisicase</fullName>
    </alternativeName>
</protein>
<evidence type="ECO:0000255" key="1">
    <source>
        <dbReference type="HAMAP-Rule" id="MF_00334"/>
    </source>
</evidence>
<evidence type="ECO:0000256" key="2">
    <source>
        <dbReference type="SAM" id="MobiDB-lite"/>
    </source>
</evidence>
<organism>
    <name type="scientific">Burkholderia vietnamiensis (strain G4 / LMG 22486)</name>
    <name type="common">Burkholderia cepacia (strain R1808)</name>
    <dbReference type="NCBI Taxonomy" id="269482"/>
    <lineage>
        <taxon>Bacteria</taxon>
        <taxon>Pseudomonadati</taxon>
        <taxon>Pseudomonadota</taxon>
        <taxon>Betaproteobacteria</taxon>
        <taxon>Burkholderiales</taxon>
        <taxon>Burkholderiaceae</taxon>
        <taxon>Burkholderia</taxon>
        <taxon>Burkholderia cepacia complex</taxon>
    </lineage>
</organism>
<name>HGD_BURVG</name>
<keyword id="KW-0223">Dioxygenase</keyword>
<keyword id="KW-0408">Iron</keyword>
<keyword id="KW-0479">Metal-binding</keyword>
<keyword id="KW-0560">Oxidoreductase</keyword>
<keyword id="KW-0585">Phenylalanine catabolism</keyword>
<keyword id="KW-0828">Tyrosine catabolism</keyword>
<feature type="chain" id="PRO_1000019529" description="Homogentisate 1,2-dioxygenase">
    <location>
        <begin position="1"/>
        <end position="444"/>
    </location>
</feature>
<feature type="region of interest" description="Disordered" evidence="2">
    <location>
        <begin position="92"/>
        <end position="111"/>
    </location>
</feature>
<feature type="active site" description="Proton acceptor" evidence="1">
    <location>
        <position position="298"/>
    </location>
</feature>
<feature type="binding site" evidence="1">
    <location>
        <position position="341"/>
    </location>
    <ligand>
        <name>Fe cation</name>
        <dbReference type="ChEBI" id="CHEBI:24875"/>
    </ligand>
</feature>
<feature type="binding site" evidence="1">
    <location>
        <position position="347"/>
    </location>
    <ligand>
        <name>Fe cation</name>
        <dbReference type="ChEBI" id="CHEBI:24875"/>
    </ligand>
</feature>
<feature type="binding site" evidence="1">
    <location>
        <position position="356"/>
    </location>
    <ligand>
        <name>homogentisate</name>
        <dbReference type="ChEBI" id="CHEBI:16169"/>
    </ligand>
</feature>
<feature type="binding site" evidence="1">
    <location>
        <position position="377"/>
    </location>
    <ligand>
        <name>Fe cation</name>
        <dbReference type="ChEBI" id="CHEBI:24875"/>
    </ligand>
</feature>
<feature type="binding site" evidence="1">
    <location>
        <position position="377"/>
    </location>
    <ligand>
        <name>homogentisate</name>
        <dbReference type="ChEBI" id="CHEBI:16169"/>
    </ligand>
</feature>
<gene>
    <name evidence="1" type="primary">hmgA</name>
    <name type="ordered locus">Bcep1808_0757</name>
</gene>
<proteinExistence type="inferred from homology"/>
<sequence length="444" mass="49128">MTLDLSKPATAGYLSGFGNEFATEALPGALPHGRNSPQRAPYGLYAEQLSGTAFTAPRGHNRRAWLYRIRPAAVHRPFEPFTGRQRLVAEFGDSADVPPTPPNQLRWDPLPMPVEPTDFVEGLVTMAGNGSAAAMNGCAIHLYAANRSMQDRFFYSADGELLIVPQQGRLFIATEFGRLDVEPAEIAVIPRGVRFAVALPDGDARGYICENFGALLRLPDLGPIGSNGLANPRDFLTPQAAYEDREGAFELIAKLNGRLWRADIGHSPFDVVAWHGNYAPYKYDLRLFNTIGSISYDHPDPSIFLVLQSQSDSPGVDAIDFVIFPPRWLAAEDTFRPPWFHRNVASEFMGLVHGAYDAKAEGFVPGGASLHNCMSGHGPDADTFEKASAIDTTRPHKVDATMAFMFETRTLIRPTRYALDTAQLQADYFECWQRIEKHFNPEQR</sequence>
<comment type="function">
    <text evidence="1">Involved in the catabolism of homogentisate (2,5-dihydroxyphenylacetate or 2,5-OH-PhAc), a central intermediate in the degradation of phenylalanine and tyrosine. Catalyzes the oxidative ring cleavage of the aromatic ring of homogentisate to yield maleylacetoacetate.</text>
</comment>
<comment type="catalytic activity">
    <reaction evidence="1">
        <text>homogentisate + O2 = 4-maleylacetoacetate + H(+)</text>
        <dbReference type="Rhea" id="RHEA:15449"/>
        <dbReference type="ChEBI" id="CHEBI:15378"/>
        <dbReference type="ChEBI" id="CHEBI:15379"/>
        <dbReference type="ChEBI" id="CHEBI:16169"/>
        <dbReference type="ChEBI" id="CHEBI:17105"/>
        <dbReference type="EC" id="1.13.11.5"/>
    </reaction>
</comment>
<comment type="cofactor">
    <cofactor evidence="1">
        <name>Fe cation</name>
        <dbReference type="ChEBI" id="CHEBI:24875"/>
    </cofactor>
</comment>
<comment type="pathway">
    <text evidence="1">Amino-acid degradation; L-phenylalanine degradation; acetoacetate and fumarate from L-phenylalanine: step 4/6.</text>
</comment>
<comment type="subunit">
    <text evidence="1">Hexamer; dimer of trimers.</text>
</comment>
<comment type="similarity">
    <text evidence="1">Belongs to the homogentisate dioxygenase family.</text>
</comment>
<accession>A4JBW6</accession>
<reference key="1">
    <citation type="submission" date="2007-03" db="EMBL/GenBank/DDBJ databases">
        <title>Complete sequence of chromosome 1 of Burkholderia vietnamiensis G4.</title>
        <authorList>
            <consortium name="US DOE Joint Genome Institute"/>
            <person name="Copeland A."/>
            <person name="Lucas S."/>
            <person name="Lapidus A."/>
            <person name="Barry K."/>
            <person name="Detter J.C."/>
            <person name="Glavina del Rio T."/>
            <person name="Hammon N."/>
            <person name="Israni S."/>
            <person name="Dalin E."/>
            <person name="Tice H."/>
            <person name="Pitluck S."/>
            <person name="Chain P."/>
            <person name="Malfatti S."/>
            <person name="Shin M."/>
            <person name="Vergez L."/>
            <person name="Schmutz J."/>
            <person name="Larimer F."/>
            <person name="Land M."/>
            <person name="Hauser L."/>
            <person name="Kyrpides N."/>
            <person name="Tiedje J."/>
            <person name="Richardson P."/>
        </authorList>
    </citation>
    <scope>NUCLEOTIDE SEQUENCE [LARGE SCALE GENOMIC DNA]</scope>
    <source>
        <strain>G4 / LMG 22486</strain>
    </source>
</reference>